<gene>
    <name evidence="1" type="primary">recX</name>
    <name type="ordered locus">SPAB_03517</name>
</gene>
<comment type="function">
    <text evidence="1">Modulates RecA activity.</text>
</comment>
<comment type="subcellular location">
    <subcellularLocation>
        <location evidence="1">Cytoplasm</location>
    </subcellularLocation>
</comment>
<comment type="similarity">
    <text evidence="1">Belongs to the RecX family.</text>
</comment>
<protein>
    <recommendedName>
        <fullName evidence="1">Regulatory protein RecX</fullName>
    </recommendedName>
</protein>
<sequence>MSEPTSRRPAYARLLDRAVRILAVRDHSEQELRRKLSAPVMGKNGPEEIDATADDYERVIAWCHEHHYLDDERFVMRFIASRSRKGYGPARIRQELNQKGISRESTEKAMRECEIDWSEMAREQAVRKYGEPLPSNFSEKVKVQRFLLYRGYLMDDIQQIWRNFAD</sequence>
<proteinExistence type="inferred from homology"/>
<feature type="chain" id="PRO_1000084989" description="Regulatory protein RecX">
    <location>
        <begin position="1"/>
        <end position="166"/>
    </location>
</feature>
<evidence type="ECO:0000255" key="1">
    <source>
        <dbReference type="HAMAP-Rule" id="MF_01114"/>
    </source>
</evidence>
<dbReference type="EMBL" id="CP000886">
    <property type="protein sequence ID" value="ABX68858.1"/>
    <property type="molecule type" value="Genomic_DNA"/>
</dbReference>
<dbReference type="RefSeq" id="WP_001294863.1">
    <property type="nucleotide sequence ID" value="NC_010102.1"/>
</dbReference>
<dbReference type="SMR" id="A9N0C4"/>
<dbReference type="KEGG" id="spq:SPAB_03517"/>
<dbReference type="PATRIC" id="fig|1016998.12.peg.3309"/>
<dbReference type="HOGENOM" id="CLU_066607_3_2_6"/>
<dbReference type="BioCyc" id="SENT1016998:SPAB_RS14320-MONOMER"/>
<dbReference type="Proteomes" id="UP000008556">
    <property type="component" value="Chromosome"/>
</dbReference>
<dbReference type="GO" id="GO:0005737">
    <property type="term" value="C:cytoplasm"/>
    <property type="evidence" value="ECO:0007669"/>
    <property type="project" value="UniProtKB-SubCell"/>
</dbReference>
<dbReference type="GO" id="GO:0006282">
    <property type="term" value="P:regulation of DNA repair"/>
    <property type="evidence" value="ECO:0007669"/>
    <property type="project" value="UniProtKB-UniRule"/>
</dbReference>
<dbReference type="FunFam" id="1.10.10.10:FF:000133">
    <property type="entry name" value="Regulatory protein RecX"/>
    <property type="match status" value="1"/>
</dbReference>
<dbReference type="FunFam" id="1.10.10.10:FF:000134">
    <property type="entry name" value="Regulatory protein RecX"/>
    <property type="match status" value="1"/>
</dbReference>
<dbReference type="Gene3D" id="1.10.10.10">
    <property type="entry name" value="Winged helix-like DNA-binding domain superfamily/Winged helix DNA-binding domain"/>
    <property type="match status" value="3"/>
</dbReference>
<dbReference type="HAMAP" id="MF_01114">
    <property type="entry name" value="RecX"/>
    <property type="match status" value="1"/>
</dbReference>
<dbReference type="InterPro" id="IPR053926">
    <property type="entry name" value="RecX_HTH_1st"/>
</dbReference>
<dbReference type="InterPro" id="IPR053924">
    <property type="entry name" value="RecX_HTH_2nd"/>
</dbReference>
<dbReference type="InterPro" id="IPR053925">
    <property type="entry name" value="RecX_HTH_3rd"/>
</dbReference>
<dbReference type="InterPro" id="IPR003783">
    <property type="entry name" value="Regulatory_RecX"/>
</dbReference>
<dbReference type="InterPro" id="IPR036388">
    <property type="entry name" value="WH-like_DNA-bd_sf"/>
</dbReference>
<dbReference type="NCBIfam" id="NF001052">
    <property type="entry name" value="PRK00117.1-1"/>
    <property type="match status" value="1"/>
</dbReference>
<dbReference type="PANTHER" id="PTHR33602">
    <property type="entry name" value="REGULATORY PROTEIN RECX FAMILY PROTEIN"/>
    <property type="match status" value="1"/>
</dbReference>
<dbReference type="PANTHER" id="PTHR33602:SF1">
    <property type="entry name" value="REGULATORY PROTEIN RECX FAMILY PROTEIN"/>
    <property type="match status" value="1"/>
</dbReference>
<dbReference type="Pfam" id="PF21982">
    <property type="entry name" value="RecX_HTH1"/>
    <property type="match status" value="1"/>
</dbReference>
<dbReference type="Pfam" id="PF02631">
    <property type="entry name" value="RecX_HTH2"/>
    <property type="match status" value="1"/>
</dbReference>
<dbReference type="Pfam" id="PF21981">
    <property type="entry name" value="RecX_HTH3"/>
    <property type="match status" value="1"/>
</dbReference>
<organism>
    <name type="scientific">Salmonella paratyphi B (strain ATCC BAA-1250 / SPB7)</name>
    <dbReference type="NCBI Taxonomy" id="1016998"/>
    <lineage>
        <taxon>Bacteria</taxon>
        <taxon>Pseudomonadati</taxon>
        <taxon>Pseudomonadota</taxon>
        <taxon>Gammaproteobacteria</taxon>
        <taxon>Enterobacterales</taxon>
        <taxon>Enterobacteriaceae</taxon>
        <taxon>Salmonella</taxon>
    </lineage>
</organism>
<accession>A9N0C4</accession>
<keyword id="KW-0963">Cytoplasm</keyword>
<name>RECX_SALPB</name>
<reference key="1">
    <citation type="submission" date="2007-11" db="EMBL/GenBank/DDBJ databases">
        <authorList>
            <consortium name="The Salmonella enterica serovar Paratyphi B Genome Sequencing Project"/>
            <person name="McClelland M."/>
            <person name="Sanderson E.K."/>
            <person name="Porwollik S."/>
            <person name="Spieth J."/>
            <person name="Clifton W.S."/>
            <person name="Fulton R."/>
            <person name="Cordes M."/>
            <person name="Wollam A."/>
            <person name="Shah N."/>
            <person name="Pepin K."/>
            <person name="Bhonagiri V."/>
            <person name="Nash W."/>
            <person name="Johnson M."/>
            <person name="Thiruvilangam P."/>
            <person name="Wilson R."/>
        </authorList>
    </citation>
    <scope>NUCLEOTIDE SEQUENCE [LARGE SCALE GENOMIC DNA]</scope>
    <source>
        <strain>ATCC BAA-1250 / SPB7</strain>
    </source>
</reference>